<keyword id="KW-0472">Membrane</keyword>
<keyword id="KW-0496">Mitochondrion</keyword>
<keyword id="KW-0999">Mitochondrion inner membrane</keyword>
<keyword id="KW-0653">Protein transport</keyword>
<keyword id="KW-0811">Translocation</keyword>
<keyword id="KW-0812">Transmembrane</keyword>
<keyword id="KW-1133">Transmembrane helix</keyword>
<keyword id="KW-0813">Transport</keyword>
<reference key="1">
    <citation type="journal article" date="2005" name="Science">
        <title>The genome of the basidiomycetous yeast and human pathogen Cryptococcus neoformans.</title>
        <authorList>
            <person name="Loftus B.J."/>
            <person name="Fung E."/>
            <person name="Roncaglia P."/>
            <person name="Rowley D."/>
            <person name="Amedeo P."/>
            <person name="Bruno D."/>
            <person name="Vamathevan J."/>
            <person name="Miranda M."/>
            <person name="Anderson I.J."/>
            <person name="Fraser J.A."/>
            <person name="Allen J.E."/>
            <person name="Bosdet I.E."/>
            <person name="Brent M.R."/>
            <person name="Chiu R."/>
            <person name="Doering T.L."/>
            <person name="Donlin M.J."/>
            <person name="D'Souza C.A."/>
            <person name="Fox D.S."/>
            <person name="Grinberg V."/>
            <person name="Fu J."/>
            <person name="Fukushima M."/>
            <person name="Haas B.J."/>
            <person name="Huang J.C."/>
            <person name="Janbon G."/>
            <person name="Jones S.J.M."/>
            <person name="Koo H.L."/>
            <person name="Krzywinski M.I."/>
            <person name="Kwon-Chung K.J."/>
            <person name="Lengeler K.B."/>
            <person name="Maiti R."/>
            <person name="Marra M.A."/>
            <person name="Marra R.E."/>
            <person name="Mathewson C.A."/>
            <person name="Mitchell T.G."/>
            <person name="Pertea M."/>
            <person name="Riggs F.R."/>
            <person name="Salzberg S.L."/>
            <person name="Schein J.E."/>
            <person name="Shvartsbeyn A."/>
            <person name="Shin H."/>
            <person name="Shumway M."/>
            <person name="Specht C.A."/>
            <person name="Suh B.B."/>
            <person name="Tenney A."/>
            <person name="Utterback T.R."/>
            <person name="Wickes B.L."/>
            <person name="Wortman J.R."/>
            <person name="Wye N.H."/>
            <person name="Kronstad J.W."/>
            <person name="Lodge J.K."/>
            <person name="Heitman J."/>
            <person name="Davis R.W."/>
            <person name="Fraser C.M."/>
            <person name="Hyman R.W."/>
        </authorList>
    </citation>
    <scope>NUCLEOTIDE SEQUENCE [LARGE SCALE GENOMIC DNA]</scope>
    <source>
        <strain>B-3501A</strain>
    </source>
</reference>
<evidence type="ECO:0000250" key="1"/>
<evidence type="ECO:0000255" key="2"/>
<evidence type="ECO:0000305" key="3"/>
<sequence length="458" mass="51693">MADLTPGARKPAPAELTGFRSALAHTGIPHGVLLWKPRLPSRNWLVFWSVSLSLSYAYYYDRAECKRIKQEVVERVEKYGREPMPGGSLGEPRRVVVWAGRWGGDDDADRAGRYFRKYVKPYLVAAGIDYTLPSVPLHGSITRQLHAAILLQRRQALGLAPTATPLSLPGVLDPAEAKRREVESGVVVVGRASLKEYLEGLRRGWECGVDEWAWETEVEKTLAGDGVFESVESPVEPAVETAETVVEPTADAVPKSNFGFLARPAPVTPGAPAIPAHLHTPPSPLPPTPPLLLLPFTNHLGFLQLPYMILDFFNERAKVRQGAQSALALIEGPTRDMHREDAEHWEEKSESWYNKTARQLPERLQKSRTEYYEAIKSRIDLARAYENGDREMTEEEKKANKVERIQDIQAERLKKELRWKGSEEGWEIVKPETPATWRDRWEGWLKVYQVPEDAQKGL</sequence>
<comment type="function">
    <text evidence="1">Essential component of the TIM22 complex, a complex that mediates the import and insertion of multi-pass transmembrane proteins into the mitochondrial inner membrane. The TIM22 complex forms a twin-pore translocase that uses the membrane potential as external driving force (By similarity).</text>
</comment>
<comment type="subunit">
    <text evidence="1">Component of the TIM22 complex, whose core is composed of TIM22 and TIM54, associated with the 70 kDa heterohexamer composed of TIM9 and TIM10 (or TIM8 and TIM13).</text>
</comment>
<comment type="subcellular location">
    <subcellularLocation>
        <location evidence="1">Mitochondrion inner membrane</location>
        <topology evidence="1">Single-pass membrane protein</topology>
    </subcellularLocation>
</comment>
<comment type="similarity">
    <text evidence="3">Belongs to the TIM54 family.</text>
</comment>
<feature type="chain" id="PRO_0000410307" description="Mitochondrial import inner membrane translocase subunit TIM54">
    <location>
        <begin position="1"/>
        <end position="458"/>
    </location>
</feature>
<feature type="topological domain" description="Mitochondrial matrix" evidence="2">
    <location>
        <begin position="1"/>
        <end position="43"/>
    </location>
</feature>
<feature type="transmembrane region" description="Helical" evidence="2">
    <location>
        <begin position="44"/>
        <end position="60"/>
    </location>
</feature>
<feature type="topological domain" description="Mitochondrial intermembrane" evidence="2">
    <location>
        <begin position="61"/>
        <end position="458"/>
    </location>
</feature>
<dbReference type="EMBL" id="AAEY01000046">
    <property type="protein sequence ID" value="EAL18694.1"/>
    <property type="molecule type" value="Genomic_DNA"/>
</dbReference>
<dbReference type="RefSeq" id="XP_773341.1">
    <property type="nucleotide sequence ID" value="XM_768248.1"/>
</dbReference>
<dbReference type="SMR" id="P0CR91"/>
<dbReference type="EnsemblFungi" id="AAW46435">
    <property type="protein sequence ID" value="AAW46435"/>
    <property type="gene ID" value="CNL03940"/>
</dbReference>
<dbReference type="GeneID" id="4938243"/>
<dbReference type="KEGG" id="cnb:CNBI2820"/>
<dbReference type="VEuPathDB" id="FungiDB:CNBI2820"/>
<dbReference type="HOGENOM" id="CLU_033744_0_0_1"/>
<dbReference type="OrthoDB" id="4007at5206"/>
<dbReference type="GO" id="GO:0005743">
    <property type="term" value="C:mitochondrial inner membrane"/>
    <property type="evidence" value="ECO:0007669"/>
    <property type="project" value="UniProtKB-SubCell"/>
</dbReference>
<dbReference type="GO" id="GO:0015031">
    <property type="term" value="P:protein transport"/>
    <property type="evidence" value="ECO:0007669"/>
    <property type="project" value="UniProtKB-KW"/>
</dbReference>
<dbReference type="InterPro" id="IPR021056">
    <property type="entry name" value="Mt_import_IM_translocase_Tim54"/>
</dbReference>
<dbReference type="Pfam" id="PF11711">
    <property type="entry name" value="Tim54"/>
    <property type="match status" value="1"/>
</dbReference>
<organism>
    <name type="scientific">Cryptococcus neoformans var. neoformans serotype D (strain B-3501A)</name>
    <name type="common">Filobasidiella neoformans</name>
    <dbReference type="NCBI Taxonomy" id="283643"/>
    <lineage>
        <taxon>Eukaryota</taxon>
        <taxon>Fungi</taxon>
        <taxon>Dikarya</taxon>
        <taxon>Basidiomycota</taxon>
        <taxon>Agaricomycotina</taxon>
        <taxon>Tremellomycetes</taxon>
        <taxon>Tremellales</taxon>
        <taxon>Cryptococcaceae</taxon>
        <taxon>Cryptococcus</taxon>
        <taxon>Cryptococcus neoformans species complex</taxon>
    </lineage>
</organism>
<name>TIM54_CRYNB</name>
<accession>P0CR91</accession>
<accession>Q55LT0</accession>
<accession>Q5K8Z5</accession>
<protein>
    <recommendedName>
        <fullName>Mitochondrial import inner membrane translocase subunit TIM54</fullName>
    </recommendedName>
</protein>
<gene>
    <name type="primary">TIM54</name>
    <name type="ordered locus">CNBI2820</name>
</gene>
<proteinExistence type="inferred from homology"/>